<organism>
    <name type="scientific">Sodalis glossinidius (strain morsitans)</name>
    <dbReference type="NCBI Taxonomy" id="343509"/>
    <lineage>
        <taxon>Bacteria</taxon>
        <taxon>Pseudomonadati</taxon>
        <taxon>Pseudomonadota</taxon>
        <taxon>Gammaproteobacteria</taxon>
        <taxon>Enterobacterales</taxon>
        <taxon>Bruguierivoracaceae</taxon>
        <taxon>Sodalis</taxon>
    </lineage>
</organism>
<gene>
    <name type="ordered locus">SG1468</name>
</gene>
<sequence>MNTIPTRCLLGGLLALSLLAYAGEGDGTQHIVIDSGDTARSWEAARQSQEQWNATHGLRNKVNTRVEKDFDRYDQAVDLQEKCNSSQNVNAYWEPNTSRCLDRRTGRSLLAP</sequence>
<reference key="1">
    <citation type="journal article" date="2006" name="Genome Res.">
        <title>Massive genome erosion and functional adaptations provide insights into the symbiotic lifestyle of Sodalis glossinidius in the tsetse host.</title>
        <authorList>
            <person name="Toh H."/>
            <person name="Weiss B.L."/>
            <person name="Perkin S.A.H."/>
            <person name="Yamashita A."/>
            <person name="Oshima K."/>
            <person name="Hattori M."/>
            <person name="Aksoy S."/>
        </authorList>
    </citation>
    <scope>NUCLEOTIDE SEQUENCE [LARGE SCALE GENOMIC DNA]</scope>
    <source>
        <strain>morsitans</strain>
    </source>
</reference>
<comment type="similarity">
    <text evidence="1">Belongs to the UPF0482 family.</text>
</comment>
<feature type="signal peptide" evidence="1">
    <location>
        <begin position="1"/>
        <end position="22"/>
    </location>
</feature>
<feature type="chain" id="PRO_0000300233" description="UPF0482 protein SG1468">
    <location>
        <begin position="23"/>
        <end position="112"/>
    </location>
</feature>
<keyword id="KW-0732">Signal</keyword>
<name>Y1468_SODGM</name>
<evidence type="ECO:0000255" key="1">
    <source>
        <dbReference type="HAMAP-Rule" id="MF_01581"/>
    </source>
</evidence>
<dbReference type="EMBL" id="AP008232">
    <property type="protein sequence ID" value="BAE74743.1"/>
    <property type="molecule type" value="Genomic_DNA"/>
</dbReference>
<dbReference type="RefSeq" id="WP_011411288.1">
    <property type="nucleotide sequence ID" value="NC_007712.1"/>
</dbReference>
<dbReference type="SMR" id="Q2NSY2"/>
<dbReference type="STRING" id="343509.SG1468"/>
<dbReference type="KEGG" id="sgl:SG1468"/>
<dbReference type="eggNOG" id="ENOG5032SRB">
    <property type="taxonomic scope" value="Bacteria"/>
</dbReference>
<dbReference type="HOGENOM" id="CLU_167574_0_0_6"/>
<dbReference type="OrthoDB" id="6455281at2"/>
<dbReference type="BioCyc" id="SGLO343509:SGP1_RS13005-MONOMER"/>
<dbReference type="Proteomes" id="UP000001932">
    <property type="component" value="Chromosome"/>
</dbReference>
<dbReference type="HAMAP" id="MF_01581">
    <property type="entry name" value="UPF0482"/>
    <property type="match status" value="1"/>
</dbReference>
<dbReference type="InterPro" id="IPR009700">
    <property type="entry name" value="DUF1283"/>
</dbReference>
<dbReference type="NCBIfam" id="NF010180">
    <property type="entry name" value="PRK13659.1"/>
    <property type="match status" value="1"/>
</dbReference>
<dbReference type="Pfam" id="PF06932">
    <property type="entry name" value="DUF1283"/>
    <property type="match status" value="1"/>
</dbReference>
<proteinExistence type="inferred from homology"/>
<protein>
    <recommendedName>
        <fullName evidence="1">UPF0482 protein SG1468</fullName>
    </recommendedName>
</protein>
<accession>Q2NSY2</accession>